<organism>
    <name type="scientific">Rattus norvegicus</name>
    <name type="common">Rat</name>
    <dbReference type="NCBI Taxonomy" id="10116"/>
    <lineage>
        <taxon>Eukaryota</taxon>
        <taxon>Metazoa</taxon>
        <taxon>Chordata</taxon>
        <taxon>Craniata</taxon>
        <taxon>Vertebrata</taxon>
        <taxon>Euteleostomi</taxon>
        <taxon>Mammalia</taxon>
        <taxon>Eutheria</taxon>
        <taxon>Euarchontoglires</taxon>
        <taxon>Glires</taxon>
        <taxon>Rodentia</taxon>
        <taxon>Myomorpha</taxon>
        <taxon>Muroidea</taxon>
        <taxon>Muridae</taxon>
        <taxon>Murinae</taxon>
        <taxon>Rattus</taxon>
    </lineage>
</organism>
<proteinExistence type="evidence at transcript level"/>
<gene>
    <name evidence="9 10" type="primary">Pxk</name>
</gene>
<evidence type="ECO:0000250" key="1"/>
<evidence type="ECO:0000250" key="2">
    <source>
        <dbReference type="UniProtKB" id="Q7Z7A4"/>
    </source>
</evidence>
<evidence type="ECO:0000250" key="3">
    <source>
        <dbReference type="UniProtKB" id="Q8BX57"/>
    </source>
</evidence>
<evidence type="ECO:0000255" key="4">
    <source>
        <dbReference type="PROSITE-ProRule" id="PRU00147"/>
    </source>
</evidence>
<evidence type="ECO:0000255" key="5">
    <source>
        <dbReference type="PROSITE-ProRule" id="PRU00159"/>
    </source>
</evidence>
<evidence type="ECO:0000255" key="6">
    <source>
        <dbReference type="PROSITE-ProRule" id="PRU00406"/>
    </source>
</evidence>
<evidence type="ECO:0000256" key="7">
    <source>
        <dbReference type="SAM" id="MobiDB-lite"/>
    </source>
</evidence>
<evidence type="ECO:0000305" key="8"/>
<evidence type="ECO:0000312" key="9">
    <source>
        <dbReference type="EMBL" id="AAP92800.1"/>
    </source>
</evidence>
<evidence type="ECO:0000312" key="10">
    <source>
        <dbReference type="RGD" id="727819"/>
    </source>
</evidence>
<comment type="function">
    <text evidence="2 3">Binds to and modulates brain Na,K-ATPase subunits ATP1B1 and ATP1B3 and may thereby participate in the regulation of electrical excitability and synaptic transmission. May not display kinase activity (By similarity).</text>
</comment>
<comment type="subcellular location">
    <subcellularLocation>
        <location evidence="1">Cytoplasm</location>
    </subcellularLocation>
    <subcellularLocation>
        <location evidence="1">Cell membrane</location>
        <topology evidence="1">Peripheral membrane protein</topology>
    </subcellularLocation>
    <text evidence="1">Also associates with the plasma membrane.</text>
</comment>
<comment type="domain">
    <text>The protein kinase domain is predicted to be catalytically inactive.</text>
</comment>
<comment type="similarity">
    <text evidence="8">Belongs to the protein kinase superfamily.</text>
</comment>
<dbReference type="EMBL" id="AY327408">
    <property type="protein sequence ID" value="AAP92800.1"/>
    <property type="molecule type" value="mRNA"/>
</dbReference>
<dbReference type="EMBL" id="BC098901">
    <property type="protein sequence ID" value="AAH98901.1"/>
    <property type="molecule type" value="mRNA"/>
</dbReference>
<dbReference type="RefSeq" id="NP_001386606.1">
    <property type="nucleotide sequence ID" value="NM_001399677.1"/>
</dbReference>
<dbReference type="RefSeq" id="NP_877973.1">
    <property type="nucleotide sequence ID" value="NM_182821.1"/>
</dbReference>
<dbReference type="RefSeq" id="XP_006251837.1">
    <property type="nucleotide sequence ID" value="XM_006251775.1"/>
</dbReference>
<dbReference type="SMR" id="Q4FZZ1"/>
<dbReference type="FunCoup" id="Q4FZZ1">
    <property type="interactions" value="2635"/>
</dbReference>
<dbReference type="STRING" id="10116.ENSRNOP00000010763"/>
<dbReference type="ChEMBL" id="CHEMBL2176805"/>
<dbReference type="GlyGen" id="Q4FZZ1">
    <property type="glycosylation" value="1 site"/>
</dbReference>
<dbReference type="iPTMnet" id="Q4FZZ1"/>
<dbReference type="PhosphoSitePlus" id="Q4FZZ1"/>
<dbReference type="PaxDb" id="10116-ENSRNOP00000010763"/>
<dbReference type="Ensembl" id="ENSRNOT00000010763.7">
    <property type="protein sequence ID" value="ENSRNOP00000010763.6"/>
    <property type="gene ID" value="ENSRNOG00000008024.8"/>
</dbReference>
<dbReference type="GeneID" id="306203"/>
<dbReference type="KEGG" id="rno:306203"/>
<dbReference type="AGR" id="RGD:727819"/>
<dbReference type="CTD" id="54899"/>
<dbReference type="RGD" id="727819">
    <property type="gene designation" value="Pxk"/>
</dbReference>
<dbReference type="eggNOG" id="KOG2101">
    <property type="taxonomic scope" value="Eukaryota"/>
</dbReference>
<dbReference type="GeneTree" id="ENSGT00390000017669"/>
<dbReference type="HOGENOM" id="CLU_036868_0_0_1"/>
<dbReference type="InParanoid" id="Q4FZZ1"/>
<dbReference type="OMA" id="FTQYAST"/>
<dbReference type="OrthoDB" id="41200at2759"/>
<dbReference type="PhylomeDB" id="Q4FZZ1"/>
<dbReference type="PRO" id="PR:Q4FZZ1"/>
<dbReference type="Proteomes" id="UP000002494">
    <property type="component" value="Chromosome 15"/>
</dbReference>
<dbReference type="GO" id="GO:0034451">
    <property type="term" value="C:centriolar satellite"/>
    <property type="evidence" value="ECO:0007669"/>
    <property type="project" value="Ensembl"/>
</dbReference>
<dbReference type="GO" id="GO:0005737">
    <property type="term" value="C:cytoplasm"/>
    <property type="evidence" value="ECO:0000250"/>
    <property type="project" value="UniProtKB"/>
</dbReference>
<dbReference type="GO" id="GO:0005829">
    <property type="term" value="C:cytosol"/>
    <property type="evidence" value="ECO:0007669"/>
    <property type="project" value="Ensembl"/>
</dbReference>
<dbReference type="GO" id="GO:0005886">
    <property type="term" value="C:plasma membrane"/>
    <property type="evidence" value="ECO:0000266"/>
    <property type="project" value="RGD"/>
</dbReference>
<dbReference type="GO" id="GO:0032991">
    <property type="term" value="C:protein-containing complex"/>
    <property type="evidence" value="ECO:0000266"/>
    <property type="project" value="RGD"/>
</dbReference>
<dbReference type="GO" id="GO:0003779">
    <property type="term" value="F:actin binding"/>
    <property type="evidence" value="ECO:0007669"/>
    <property type="project" value="UniProtKB-KW"/>
</dbReference>
<dbReference type="GO" id="GO:0005524">
    <property type="term" value="F:ATP binding"/>
    <property type="evidence" value="ECO:0007669"/>
    <property type="project" value="InterPro"/>
</dbReference>
<dbReference type="GO" id="GO:0035091">
    <property type="term" value="F:phosphatidylinositol binding"/>
    <property type="evidence" value="ECO:0007669"/>
    <property type="project" value="InterPro"/>
</dbReference>
<dbReference type="GO" id="GO:0004672">
    <property type="term" value="F:protein kinase activity"/>
    <property type="evidence" value="ECO:0007669"/>
    <property type="project" value="InterPro"/>
</dbReference>
<dbReference type="GO" id="GO:0006954">
    <property type="term" value="P:inflammatory response"/>
    <property type="evidence" value="ECO:0000266"/>
    <property type="project" value="RGD"/>
</dbReference>
<dbReference type="GO" id="GO:0050804">
    <property type="term" value="P:modulation of chemical synaptic transmission"/>
    <property type="evidence" value="ECO:0000250"/>
    <property type="project" value="UniProtKB"/>
</dbReference>
<dbReference type="CDD" id="cd06871">
    <property type="entry name" value="PX_MONaKA"/>
    <property type="match status" value="1"/>
</dbReference>
<dbReference type="CDD" id="cd22062">
    <property type="entry name" value="WH2_DdVASP-like"/>
    <property type="match status" value="1"/>
</dbReference>
<dbReference type="FunFam" id="3.30.1520.10:FF:000010">
    <property type="entry name" value="PX domain-containing protein kinase-like protein isoform X6"/>
    <property type="match status" value="1"/>
</dbReference>
<dbReference type="FunFam" id="1.10.510.10:FF:000830">
    <property type="entry name" value="PX domain-containing serine/threonine kinase"/>
    <property type="match status" value="1"/>
</dbReference>
<dbReference type="Gene3D" id="3.30.200.20">
    <property type="entry name" value="Phosphorylase Kinase, domain 1"/>
    <property type="match status" value="1"/>
</dbReference>
<dbReference type="Gene3D" id="3.30.1520.10">
    <property type="entry name" value="Phox-like domain"/>
    <property type="match status" value="1"/>
</dbReference>
<dbReference type="Gene3D" id="1.10.510.10">
    <property type="entry name" value="Transferase(Phosphotransferase) domain 1"/>
    <property type="match status" value="1"/>
</dbReference>
<dbReference type="InterPro" id="IPR011009">
    <property type="entry name" value="Kinase-like_dom_sf"/>
</dbReference>
<dbReference type="InterPro" id="IPR037903">
    <property type="entry name" value="MONaKA_PX"/>
</dbReference>
<dbReference type="InterPro" id="IPR000719">
    <property type="entry name" value="Prot_kinase_dom"/>
</dbReference>
<dbReference type="InterPro" id="IPR001683">
    <property type="entry name" value="PX_dom"/>
</dbReference>
<dbReference type="InterPro" id="IPR036871">
    <property type="entry name" value="PX_dom_sf"/>
</dbReference>
<dbReference type="InterPro" id="IPR051837">
    <property type="entry name" value="SortingNexin/PXDomain-PKLike"/>
</dbReference>
<dbReference type="InterPro" id="IPR003124">
    <property type="entry name" value="WH2_dom"/>
</dbReference>
<dbReference type="PANTHER" id="PTHR22999:SF40">
    <property type="entry name" value="PX DOMAIN-CONTAINING PROTEIN KINASE-LIKE PROTEIN"/>
    <property type="match status" value="1"/>
</dbReference>
<dbReference type="PANTHER" id="PTHR22999">
    <property type="entry name" value="PX SERINE/THREONINE KINASE PXK"/>
    <property type="match status" value="1"/>
</dbReference>
<dbReference type="Pfam" id="PF00787">
    <property type="entry name" value="PX"/>
    <property type="match status" value="1"/>
</dbReference>
<dbReference type="Pfam" id="PF02205">
    <property type="entry name" value="WH2"/>
    <property type="match status" value="1"/>
</dbReference>
<dbReference type="SMART" id="SM00312">
    <property type="entry name" value="PX"/>
    <property type="match status" value="1"/>
</dbReference>
<dbReference type="SMART" id="SM00220">
    <property type="entry name" value="S_TKc"/>
    <property type="match status" value="1"/>
</dbReference>
<dbReference type="SUPFAM" id="SSF56112">
    <property type="entry name" value="Protein kinase-like (PK-like)"/>
    <property type="match status" value="1"/>
</dbReference>
<dbReference type="SUPFAM" id="SSF64268">
    <property type="entry name" value="PX domain"/>
    <property type="match status" value="1"/>
</dbReference>
<dbReference type="PROSITE" id="PS50011">
    <property type="entry name" value="PROTEIN_KINASE_DOM"/>
    <property type="match status" value="1"/>
</dbReference>
<dbReference type="PROSITE" id="PS50195">
    <property type="entry name" value="PX"/>
    <property type="match status" value="1"/>
</dbReference>
<dbReference type="PROSITE" id="PS51082">
    <property type="entry name" value="WH2"/>
    <property type="match status" value="1"/>
</dbReference>
<feature type="chain" id="PRO_0000086594" description="PX domain-containing protein kinase-like protein">
    <location>
        <begin position="1"/>
        <end position="580"/>
    </location>
</feature>
<feature type="domain" description="PX" evidence="4">
    <location>
        <begin position="14"/>
        <end position="126"/>
    </location>
</feature>
<feature type="domain" description="Protein kinase" evidence="5">
    <location>
        <begin position="88"/>
        <end position="481"/>
    </location>
</feature>
<feature type="domain" description="WH2" evidence="6">
    <location>
        <begin position="549"/>
        <end position="568"/>
    </location>
</feature>
<feature type="region of interest" description="Disordered" evidence="7">
    <location>
        <begin position="433"/>
        <end position="551"/>
    </location>
</feature>
<feature type="compositionally biased region" description="Basic residues" evidence="7">
    <location>
        <begin position="437"/>
        <end position="448"/>
    </location>
</feature>
<feature type="compositionally biased region" description="Basic residues" evidence="7">
    <location>
        <begin position="457"/>
        <end position="469"/>
    </location>
</feature>
<feature type="compositionally biased region" description="Low complexity" evidence="7">
    <location>
        <begin position="483"/>
        <end position="514"/>
    </location>
</feature>
<feature type="compositionally biased region" description="Pro residues" evidence="7">
    <location>
        <begin position="515"/>
        <end position="531"/>
    </location>
</feature>
<feature type="sequence conflict" description="In Ref. 1; AAP92800." evidence="8" ref="1">
    <location>
        <position position="489"/>
    </location>
</feature>
<reference evidence="8 9" key="1">
    <citation type="submission" date="2003-06" db="EMBL/GenBank/DDBJ databases">
        <authorList>
            <person name="Shan Y.X."/>
            <person name="Yu L."/>
        </authorList>
    </citation>
    <scope>NUCLEOTIDE SEQUENCE [MRNA]</scope>
    <source>
        <strain evidence="9">Sprague-Dawley</strain>
    </source>
</reference>
<reference key="2">
    <citation type="journal article" date="2004" name="Genome Res.">
        <title>The status, quality, and expansion of the NIH full-length cDNA project: the Mammalian Gene Collection (MGC).</title>
        <authorList>
            <consortium name="The MGC Project Team"/>
        </authorList>
    </citation>
    <scope>NUCLEOTIDE SEQUENCE [MRNA]</scope>
    <source>
        <tissue>Kidney</tissue>
    </source>
</reference>
<sequence>MAFMEKPPARKVLLDDTVPLTAAVEASQSLQSHTEYIIRVQRGISAENSWQIVRRYSDFDLLNNSLQITGLSLPLPPKKLIGNMDREFIAERQKGLQNYLNVIMANHVLSNCELLKKFLDPNNYSANYTEIALQQVSMFFRSEPKWEVVEPLKDIGWRIRKKYFLMKIKNQPKERLVLSWADLGPDKYLSDKDFQCLIKLLPSCVHPYIYRVTFATASESSALLIRTFNDKGTLKDLIYKAKPKDPFLKKYCNPKKTQGLELQQIKTYGRQILEVLKFLHDKGFPYGHLHAANVMLDGNTCRLLDLENSLLGLPSFYRSYFTQFRKINTLESVDVHCFGHLLYEMTYGRPPDSVPVDSFPPASSMAVVAVLESTLSCEACKNGMPTVSRLLQMPLFSDVLLTTSEKPQFKIPTKLREALRIAKECIEKRLTEEQKQIHQHRRLTRAQSHHGSEEERKRRKILARKKSKRSAVENSEEQPVKHSNANNSAGSGASSPLTSPSSPTPPSTAGLSSALPPPPPPPPPPPPPAGPSPGTEMPAPPLPQAVNGVNRGALLSSIQNFQKGTLRKAKTCDHSAPKIG</sequence>
<keyword id="KW-0009">Actin-binding</keyword>
<keyword id="KW-1003">Cell membrane</keyword>
<keyword id="KW-0963">Cytoplasm</keyword>
<keyword id="KW-0472">Membrane</keyword>
<keyword id="KW-1185">Reference proteome</keyword>
<protein>
    <recommendedName>
        <fullName>PX domain-containing protein kinase-like protein</fullName>
    </recommendedName>
    <alternativeName>
        <fullName>Modulator of Na,K-ATPase</fullName>
        <shortName>MONaKA</shortName>
    </alternativeName>
</protein>
<accession>Q4FZZ1</accession>
<accession>Q7TNZ7</accession>
<name>PXK_RAT</name>